<keyword id="KW-0028">Amino-acid biosynthesis</keyword>
<keyword id="KW-0055">Arginine biosynthesis</keyword>
<keyword id="KW-0067">ATP-binding</keyword>
<keyword id="KW-0963">Cytoplasm</keyword>
<keyword id="KW-0418">Kinase</keyword>
<keyword id="KW-0547">Nucleotide-binding</keyword>
<keyword id="KW-1185">Reference proteome</keyword>
<keyword id="KW-0808">Transferase</keyword>
<accession>B8D1G8</accession>
<organism>
    <name type="scientific">Halothermothrix orenii (strain H 168 / OCM 544 / DSM 9562)</name>
    <dbReference type="NCBI Taxonomy" id="373903"/>
    <lineage>
        <taxon>Bacteria</taxon>
        <taxon>Bacillati</taxon>
        <taxon>Bacillota</taxon>
        <taxon>Clostridia</taxon>
        <taxon>Halanaerobiales</taxon>
        <taxon>Halothermotrichaceae</taxon>
        <taxon>Halothermothrix</taxon>
    </lineage>
</organism>
<sequence length="290" mass="31411">MEELINKAQTLVEALPYIRNFYGKTFVIKYGGSTMGDKRLKEKIMEDITLLKYVGVNPVLIHGGGPAISEAMESMDKEARFIQGLRITDSETMSLVEMVLVGKVNKELVSIINRLGGEAVGICGKDGGLIEADKLIFEDKSIDLGHVGSVKKINPEIVLNLIKGGYIPVISPVGSSKEGDTYNINADTVAGKLAVSLKAEKLIFLTDVDGVWSDPSNEKTRVSSLTVNEVKSWIGEGKIKGGMVPKVEACIEAVTCGVNRTHILNGLIPHALLLEIFTDRGIGTMILKER</sequence>
<dbReference type="EC" id="2.7.2.8" evidence="1"/>
<dbReference type="EMBL" id="CP001098">
    <property type="protein sequence ID" value="ACL69045.1"/>
    <property type="molecule type" value="Genomic_DNA"/>
</dbReference>
<dbReference type="SMR" id="B8D1G8"/>
<dbReference type="STRING" id="373903.Hore_02840"/>
<dbReference type="KEGG" id="hor:Hore_02840"/>
<dbReference type="eggNOG" id="COG0548">
    <property type="taxonomic scope" value="Bacteria"/>
</dbReference>
<dbReference type="HOGENOM" id="CLU_053680_0_0_9"/>
<dbReference type="UniPathway" id="UPA00068">
    <property type="reaction ID" value="UER00107"/>
</dbReference>
<dbReference type="Proteomes" id="UP000000719">
    <property type="component" value="Chromosome"/>
</dbReference>
<dbReference type="GO" id="GO:0005737">
    <property type="term" value="C:cytoplasm"/>
    <property type="evidence" value="ECO:0007669"/>
    <property type="project" value="UniProtKB-SubCell"/>
</dbReference>
<dbReference type="GO" id="GO:0003991">
    <property type="term" value="F:acetylglutamate kinase activity"/>
    <property type="evidence" value="ECO:0007669"/>
    <property type="project" value="UniProtKB-UniRule"/>
</dbReference>
<dbReference type="GO" id="GO:0005524">
    <property type="term" value="F:ATP binding"/>
    <property type="evidence" value="ECO:0007669"/>
    <property type="project" value="UniProtKB-UniRule"/>
</dbReference>
<dbReference type="GO" id="GO:0042450">
    <property type="term" value="P:arginine biosynthetic process via ornithine"/>
    <property type="evidence" value="ECO:0007669"/>
    <property type="project" value="UniProtKB-UniRule"/>
</dbReference>
<dbReference type="GO" id="GO:0006526">
    <property type="term" value="P:L-arginine biosynthetic process"/>
    <property type="evidence" value="ECO:0007669"/>
    <property type="project" value="UniProtKB-UniPathway"/>
</dbReference>
<dbReference type="CDD" id="cd04250">
    <property type="entry name" value="AAK_NAGK-C"/>
    <property type="match status" value="1"/>
</dbReference>
<dbReference type="FunFam" id="3.40.1160.10:FF:000004">
    <property type="entry name" value="Acetylglutamate kinase"/>
    <property type="match status" value="1"/>
</dbReference>
<dbReference type="Gene3D" id="3.40.1160.10">
    <property type="entry name" value="Acetylglutamate kinase-like"/>
    <property type="match status" value="1"/>
</dbReference>
<dbReference type="HAMAP" id="MF_00082">
    <property type="entry name" value="ArgB"/>
    <property type="match status" value="1"/>
</dbReference>
<dbReference type="InterPro" id="IPR036393">
    <property type="entry name" value="AceGlu_kinase-like_sf"/>
</dbReference>
<dbReference type="InterPro" id="IPR004662">
    <property type="entry name" value="AcgluKinase_fam"/>
</dbReference>
<dbReference type="InterPro" id="IPR037528">
    <property type="entry name" value="ArgB"/>
</dbReference>
<dbReference type="InterPro" id="IPR001048">
    <property type="entry name" value="Asp/Glu/Uridylate_kinase"/>
</dbReference>
<dbReference type="InterPro" id="IPR001057">
    <property type="entry name" value="Glu/AcGlu_kinase"/>
</dbReference>
<dbReference type="InterPro" id="IPR041727">
    <property type="entry name" value="NAGK-C"/>
</dbReference>
<dbReference type="NCBIfam" id="TIGR00761">
    <property type="entry name" value="argB"/>
    <property type="match status" value="1"/>
</dbReference>
<dbReference type="PANTHER" id="PTHR23342">
    <property type="entry name" value="N-ACETYLGLUTAMATE SYNTHASE"/>
    <property type="match status" value="1"/>
</dbReference>
<dbReference type="PANTHER" id="PTHR23342:SF0">
    <property type="entry name" value="N-ACETYLGLUTAMATE SYNTHASE, MITOCHONDRIAL"/>
    <property type="match status" value="1"/>
</dbReference>
<dbReference type="Pfam" id="PF00696">
    <property type="entry name" value="AA_kinase"/>
    <property type="match status" value="1"/>
</dbReference>
<dbReference type="PIRSF" id="PIRSF000728">
    <property type="entry name" value="NAGK"/>
    <property type="match status" value="1"/>
</dbReference>
<dbReference type="PRINTS" id="PR00474">
    <property type="entry name" value="GLU5KINASE"/>
</dbReference>
<dbReference type="SUPFAM" id="SSF53633">
    <property type="entry name" value="Carbamate kinase-like"/>
    <property type="match status" value="1"/>
</dbReference>
<proteinExistence type="inferred from homology"/>
<reference key="1">
    <citation type="journal article" date="2009" name="PLoS ONE">
        <title>Genome analysis of the anaerobic thermohalophilic bacterium Halothermothrix orenii.</title>
        <authorList>
            <person name="Mavromatis K."/>
            <person name="Ivanova N."/>
            <person name="Anderson I."/>
            <person name="Lykidis A."/>
            <person name="Hooper S.D."/>
            <person name="Sun H."/>
            <person name="Kunin V."/>
            <person name="Lapidus A."/>
            <person name="Hugenholtz P."/>
            <person name="Patel B."/>
            <person name="Kyrpides N.C."/>
        </authorList>
    </citation>
    <scope>NUCLEOTIDE SEQUENCE [LARGE SCALE GENOMIC DNA]</scope>
    <source>
        <strain>H 168 / OCM 544 / DSM 9562</strain>
    </source>
</reference>
<feature type="chain" id="PRO_1000118352" description="Acetylglutamate kinase">
    <location>
        <begin position="1"/>
        <end position="290"/>
    </location>
</feature>
<feature type="binding site" evidence="1">
    <location>
        <begin position="64"/>
        <end position="65"/>
    </location>
    <ligand>
        <name>substrate</name>
    </ligand>
</feature>
<feature type="binding site" evidence="1">
    <location>
        <position position="86"/>
    </location>
    <ligand>
        <name>substrate</name>
    </ligand>
</feature>
<feature type="binding site" evidence="1">
    <location>
        <position position="183"/>
    </location>
    <ligand>
        <name>substrate</name>
    </ligand>
</feature>
<feature type="site" description="Transition state stabilizer" evidence="1">
    <location>
        <position position="29"/>
    </location>
</feature>
<feature type="site" description="Transition state stabilizer" evidence="1">
    <location>
        <position position="246"/>
    </location>
</feature>
<gene>
    <name evidence="1" type="primary">argB</name>
    <name type="ordered locus">Hore_02840</name>
</gene>
<evidence type="ECO:0000255" key="1">
    <source>
        <dbReference type="HAMAP-Rule" id="MF_00082"/>
    </source>
</evidence>
<comment type="function">
    <text evidence="1">Catalyzes the ATP-dependent phosphorylation of N-acetyl-L-glutamate.</text>
</comment>
<comment type="catalytic activity">
    <reaction evidence="1">
        <text>N-acetyl-L-glutamate + ATP = N-acetyl-L-glutamyl 5-phosphate + ADP</text>
        <dbReference type="Rhea" id="RHEA:14629"/>
        <dbReference type="ChEBI" id="CHEBI:30616"/>
        <dbReference type="ChEBI" id="CHEBI:44337"/>
        <dbReference type="ChEBI" id="CHEBI:57936"/>
        <dbReference type="ChEBI" id="CHEBI:456216"/>
        <dbReference type="EC" id="2.7.2.8"/>
    </reaction>
</comment>
<comment type="pathway">
    <text evidence="1">Amino-acid biosynthesis; L-arginine biosynthesis; N(2)-acetyl-L-ornithine from L-glutamate: step 2/4.</text>
</comment>
<comment type="subcellular location">
    <subcellularLocation>
        <location evidence="1">Cytoplasm</location>
    </subcellularLocation>
</comment>
<comment type="similarity">
    <text evidence="1">Belongs to the acetylglutamate kinase family. ArgB subfamily.</text>
</comment>
<name>ARGB_HALOH</name>
<protein>
    <recommendedName>
        <fullName evidence="1">Acetylglutamate kinase</fullName>
        <ecNumber evidence="1">2.7.2.8</ecNumber>
    </recommendedName>
    <alternativeName>
        <fullName evidence="1">N-acetyl-L-glutamate 5-phosphotransferase</fullName>
    </alternativeName>
    <alternativeName>
        <fullName evidence="1">NAG kinase</fullName>
        <shortName evidence="1">NAGK</shortName>
    </alternativeName>
</protein>